<gene>
    <name type="primary">OR6K3</name>
</gene>
<proteinExistence type="inferred from homology"/>
<name>OR6K3_HUMAN</name>
<keyword id="KW-1003">Cell membrane</keyword>
<keyword id="KW-1015">Disulfide bond</keyword>
<keyword id="KW-0297">G-protein coupled receptor</keyword>
<keyword id="KW-0325">Glycoprotein</keyword>
<keyword id="KW-0472">Membrane</keyword>
<keyword id="KW-0552">Olfaction</keyword>
<keyword id="KW-0675">Receptor</keyword>
<keyword id="KW-1185">Reference proteome</keyword>
<keyword id="KW-0716">Sensory transduction</keyword>
<keyword id="KW-0807">Transducer</keyword>
<keyword id="KW-0812">Transmembrane</keyword>
<keyword id="KW-1133">Transmembrane helix</keyword>
<sequence>MCWTMPSPFTGSSTRNMESGNQSTVTEFIFTGFPQLQDGSLLYFFPLLFIYTFIIIDNLLIFSAVRLDTHLHNPMYNFISIFSFLEIWYTTATIPKMLSNLISEKKAISMTGCILQMYFFHSLENSEGILLTTMAIDRYVAICNPLRYQMIMTPRLCAQLSAGSCLFGFLILLPEIVMISTLPFCGPNQIHQIFCDLVPVLSLACTDTSMILIEDVIHAVTIIITFLIIALSYVRIVTVILRIPSSEGRQKAFSTCAGHLMVFPIFFGSVSLMYLRFSDTYPPVLDTAIALMFTVLAPFFNPIIYSLRNKDMNNAIKKLFCLQKVLNKPGG</sequence>
<comment type="function">
    <text evidence="5">Odorant receptor.</text>
</comment>
<comment type="subcellular location">
    <subcellularLocation>
        <location>Cell membrane</location>
        <topology>Multi-pass membrane protein</topology>
    </subcellularLocation>
</comment>
<comment type="similarity">
    <text evidence="2">Belongs to the G-protein coupled receptor 1 family.</text>
</comment>
<comment type="caution">
    <text evidence="5">It is uncertain whether Met-1, Met-5 or Met-17 is the initiator.</text>
</comment>
<comment type="sequence caution" evidence="5">
    <conflict type="erroneous initiation">
        <sequence resource="EMBL-CDS" id="BAC05859"/>
    </conflict>
    <text>Truncated N-terminus.</text>
</comment>
<comment type="online information" name="Human Olfactory Receptor Data Exploratorium (HORDE)">
    <link uri="http://genome.weizmann.ac.il/horde/card/index/symbol:OR6K3"/>
</comment>
<feature type="chain" id="PRO_0000150630" description="Olfactory receptor 6K3">
    <location>
        <begin position="1"/>
        <end position="331"/>
    </location>
</feature>
<feature type="topological domain" description="Extracellular" evidence="1">
    <location>
        <begin position="1"/>
        <end position="41"/>
    </location>
</feature>
<feature type="transmembrane region" description="Helical; Name=1" evidence="1">
    <location>
        <begin position="42"/>
        <end position="62"/>
    </location>
</feature>
<feature type="topological domain" description="Cytoplasmic" evidence="1">
    <location>
        <begin position="63"/>
        <end position="70"/>
    </location>
</feature>
<feature type="transmembrane region" description="Helical; Name=2" evidence="1">
    <location>
        <begin position="71"/>
        <end position="91"/>
    </location>
</feature>
<feature type="topological domain" description="Extracellular" evidence="1">
    <location>
        <begin position="92"/>
        <end position="115"/>
    </location>
</feature>
<feature type="transmembrane region" description="Helical; Name=3" evidence="1">
    <location>
        <begin position="116"/>
        <end position="136"/>
    </location>
</feature>
<feature type="topological domain" description="Cytoplasmic" evidence="1">
    <location>
        <begin position="137"/>
        <end position="155"/>
    </location>
</feature>
<feature type="transmembrane region" description="Helical; Name=4" evidence="1">
    <location>
        <begin position="156"/>
        <end position="176"/>
    </location>
</feature>
<feature type="topological domain" description="Extracellular" evidence="1">
    <location>
        <begin position="177"/>
        <end position="212"/>
    </location>
</feature>
<feature type="transmembrane region" description="Helical; Name=5" evidence="1">
    <location>
        <begin position="213"/>
        <end position="232"/>
    </location>
</feature>
<feature type="topological domain" description="Cytoplasmic" evidence="1">
    <location>
        <begin position="233"/>
        <end position="252"/>
    </location>
</feature>
<feature type="transmembrane region" description="Helical; Name=6" evidence="1">
    <location>
        <begin position="253"/>
        <end position="273"/>
    </location>
</feature>
<feature type="topological domain" description="Extracellular" evidence="1">
    <location>
        <begin position="274"/>
        <end position="286"/>
    </location>
</feature>
<feature type="transmembrane region" description="Helical; Name=7" evidence="1">
    <location>
        <begin position="287"/>
        <end position="307"/>
    </location>
</feature>
<feature type="topological domain" description="Cytoplasmic" evidence="1">
    <location>
        <begin position="308"/>
        <end position="331"/>
    </location>
</feature>
<feature type="glycosylation site" description="N-linked (GlcNAc...) asparagine" evidence="1">
    <location>
        <position position="21"/>
    </location>
</feature>
<feature type="disulfide bond" evidence="2">
    <location>
        <begin position="113"/>
        <end position="205"/>
    </location>
</feature>
<feature type="sequence variant" id="VAR_055066" description="In dbSNP:rs857705.">
    <original>G</original>
    <variation>R</variation>
    <location>
        <position position="20"/>
    </location>
</feature>
<feature type="sequence variant" id="VAR_062052" description="In dbSNP:rs857704.">
    <original>Q</original>
    <variation>H</variation>
    <location>
        <position position="159"/>
    </location>
</feature>
<feature type="sequence variant" id="VAR_064741" description="Found in a renal cell carcinoma sample; somatic mutation; dbSNP:rs151330882." evidence="4">
    <original>V</original>
    <variation>M</variation>
    <location>
        <position position="216"/>
    </location>
</feature>
<feature type="sequence variant" id="VAR_055067" description="In dbSNP:rs857703." evidence="3">
    <original>P</original>
    <variation>S</variation>
    <location>
        <position position="244"/>
    </location>
</feature>
<feature type="sequence variant" id="VAR_055068" description="In dbSNP:rs28568406." evidence="3">
    <original>P</original>
    <variation>L</variation>
    <location>
        <position position="264"/>
    </location>
</feature>
<feature type="sequence variant" id="VAR_062053" description="In dbSNP:rs857702.">
    <original>D</original>
    <variation>N</variation>
    <location>
        <position position="279"/>
    </location>
</feature>
<feature type="sequence variant" id="VAR_055069" description="In dbSNP:rs16840675.">
    <original>R</original>
    <variation>K</variation>
    <location>
        <position position="308"/>
    </location>
</feature>
<reference key="1">
    <citation type="submission" date="2001-07" db="EMBL/GenBank/DDBJ databases">
        <title>Genome-wide discovery and analysis of human seven transmembrane helix receptor genes.</title>
        <authorList>
            <person name="Suwa M."/>
            <person name="Sato T."/>
            <person name="Okouchi I."/>
            <person name="Arita M."/>
            <person name="Futami K."/>
            <person name="Matsumoto S."/>
            <person name="Tsutsumi S."/>
            <person name="Aburatani H."/>
            <person name="Asai K."/>
            <person name="Akiyama Y."/>
        </authorList>
    </citation>
    <scope>NUCLEOTIDE SEQUENCE [GENOMIC DNA]</scope>
</reference>
<reference key="2">
    <citation type="journal article" date="2006" name="Nature">
        <title>The DNA sequence and biological annotation of human chromosome 1.</title>
        <authorList>
            <person name="Gregory S.G."/>
            <person name="Barlow K.F."/>
            <person name="McLay K.E."/>
            <person name="Kaul R."/>
            <person name="Swarbreck D."/>
            <person name="Dunham A."/>
            <person name="Scott C.E."/>
            <person name="Howe K.L."/>
            <person name="Woodfine K."/>
            <person name="Spencer C.C.A."/>
            <person name="Jones M.C."/>
            <person name="Gillson C."/>
            <person name="Searle S."/>
            <person name="Zhou Y."/>
            <person name="Kokocinski F."/>
            <person name="McDonald L."/>
            <person name="Evans R."/>
            <person name="Phillips K."/>
            <person name="Atkinson A."/>
            <person name="Cooper R."/>
            <person name="Jones C."/>
            <person name="Hall R.E."/>
            <person name="Andrews T.D."/>
            <person name="Lloyd C."/>
            <person name="Ainscough R."/>
            <person name="Almeida J.P."/>
            <person name="Ambrose K.D."/>
            <person name="Anderson F."/>
            <person name="Andrew R.W."/>
            <person name="Ashwell R.I.S."/>
            <person name="Aubin K."/>
            <person name="Babbage A.K."/>
            <person name="Bagguley C.L."/>
            <person name="Bailey J."/>
            <person name="Beasley H."/>
            <person name="Bethel G."/>
            <person name="Bird C.P."/>
            <person name="Bray-Allen S."/>
            <person name="Brown J.Y."/>
            <person name="Brown A.J."/>
            <person name="Buckley D."/>
            <person name="Burton J."/>
            <person name="Bye J."/>
            <person name="Carder C."/>
            <person name="Chapman J.C."/>
            <person name="Clark S.Y."/>
            <person name="Clarke G."/>
            <person name="Clee C."/>
            <person name="Cobley V."/>
            <person name="Collier R.E."/>
            <person name="Corby N."/>
            <person name="Coville G.J."/>
            <person name="Davies J."/>
            <person name="Deadman R."/>
            <person name="Dunn M."/>
            <person name="Earthrowl M."/>
            <person name="Ellington A.G."/>
            <person name="Errington H."/>
            <person name="Frankish A."/>
            <person name="Frankland J."/>
            <person name="French L."/>
            <person name="Garner P."/>
            <person name="Garnett J."/>
            <person name="Gay L."/>
            <person name="Ghori M.R.J."/>
            <person name="Gibson R."/>
            <person name="Gilby L.M."/>
            <person name="Gillett W."/>
            <person name="Glithero R.J."/>
            <person name="Grafham D.V."/>
            <person name="Griffiths C."/>
            <person name="Griffiths-Jones S."/>
            <person name="Grocock R."/>
            <person name="Hammond S."/>
            <person name="Harrison E.S.I."/>
            <person name="Hart E."/>
            <person name="Haugen E."/>
            <person name="Heath P.D."/>
            <person name="Holmes S."/>
            <person name="Holt K."/>
            <person name="Howden P.J."/>
            <person name="Hunt A.R."/>
            <person name="Hunt S.E."/>
            <person name="Hunter G."/>
            <person name="Isherwood J."/>
            <person name="James R."/>
            <person name="Johnson C."/>
            <person name="Johnson D."/>
            <person name="Joy A."/>
            <person name="Kay M."/>
            <person name="Kershaw J.K."/>
            <person name="Kibukawa M."/>
            <person name="Kimberley A.M."/>
            <person name="King A."/>
            <person name="Knights A.J."/>
            <person name="Lad H."/>
            <person name="Laird G."/>
            <person name="Lawlor S."/>
            <person name="Leongamornlert D.A."/>
            <person name="Lloyd D.M."/>
            <person name="Loveland J."/>
            <person name="Lovell J."/>
            <person name="Lush M.J."/>
            <person name="Lyne R."/>
            <person name="Martin S."/>
            <person name="Mashreghi-Mohammadi M."/>
            <person name="Matthews L."/>
            <person name="Matthews N.S.W."/>
            <person name="McLaren S."/>
            <person name="Milne S."/>
            <person name="Mistry S."/>
            <person name="Moore M.J.F."/>
            <person name="Nickerson T."/>
            <person name="O'Dell C.N."/>
            <person name="Oliver K."/>
            <person name="Palmeiri A."/>
            <person name="Palmer S.A."/>
            <person name="Parker A."/>
            <person name="Patel D."/>
            <person name="Pearce A.V."/>
            <person name="Peck A.I."/>
            <person name="Pelan S."/>
            <person name="Phelps K."/>
            <person name="Phillimore B.J."/>
            <person name="Plumb R."/>
            <person name="Rajan J."/>
            <person name="Raymond C."/>
            <person name="Rouse G."/>
            <person name="Saenphimmachak C."/>
            <person name="Sehra H.K."/>
            <person name="Sheridan E."/>
            <person name="Shownkeen R."/>
            <person name="Sims S."/>
            <person name="Skuce C.D."/>
            <person name="Smith M."/>
            <person name="Steward C."/>
            <person name="Subramanian S."/>
            <person name="Sycamore N."/>
            <person name="Tracey A."/>
            <person name="Tromans A."/>
            <person name="Van Helmond Z."/>
            <person name="Wall M."/>
            <person name="Wallis J.M."/>
            <person name="White S."/>
            <person name="Whitehead S.L."/>
            <person name="Wilkinson J.E."/>
            <person name="Willey D.L."/>
            <person name="Williams H."/>
            <person name="Wilming L."/>
            <person name="Wray P.W."/>
            <person name="Wu Z."/>
            <person name="Coulson A."/>
            <person name="Vaudin M."/>
            <person name="Sulston J.E."/>
            <person name="Durbin R.M."/>
            <person name="Hubbard T."/>
            <person name="Wooster R."/>
            <person name="Dunham I."/>
            <person name="Carter N.P."/>
            <person name="McVean G."/>
            <person name="Ross M.T."/>
            <person name="Harrow J."/>
            <person name="Olson M.V."/>
            <person name="Beck S."/>
            <person name="Rogers J."/>
            <person name="Bentley D.R."/>
        </authorList>
    </citation>
    <scope>NUCLEOTIDE SEQUENCE [LARGE SCALE GENOMIC DNA]</scope>
</reference>
<reference key="3">
    <citation type="journal article" date="2004" name="Proc. Natl. Acad. Sci. U.S.A.">
        <title>The human olfactory receptor gene family.</title>
        <authorList>
            <person name="Malnic B."/>
            <person name="Godfrey P.A."/>
            <person name="Buck L.B."/>
        </authorList>
    </citation>
    <scope>IDENTIFICATION</scope>
    <scope>VARIANTS SER-244 AND LEU-264</scope>
</reference>
<reference key="4">
    <citation type="journal article" date="2004" name="Proc. Natl. Acad. Sci. U.S.A.">
        <authorList>
            <person name="Malnic B."/>
            <person name="Godfrey P.A."/>
            <person name="Buck L.B."/>
        </authorList>
    </citation>
    <scope>ERRATUM OF PUBMED:14983052</scope>
</reference>
<reference key="5">
    <citation type="journal article" date="2011" name="Nature">
        <title>Exome sequencing identifies frequent mutation of the SWI/SNF complex gene PBRM1 in renal carcinoma.</title>
        <authorList>
            <person name="Varela I."/>
            <person name="Tarpey P."/>
            <person name="Raine K."/>
            <person name="Huang D."/>
            <person name="Ong C.K."/>
            <person name="Stephens P."/>
            <person name="Davies H."/>
            <person name="Jones D."/>
            <person name="Lin M.L."/>
            <person name="Teague J."/>
            <person name="Bignell G."/>
            <person name="Butler A."/>
            <person name="Cho J."/>
            <person name="Dalgliesh G.L."/>
            <person name="Galappaththige D."/>
            <person name="Greenman C."/>
            <person name="Hardy C."/>
            <person name="Jia M."/>
            <person name="Latimer C."/>
            <person name="Lau K.W."/>
            <person name="Marshall J."/>
            <person name="McLaren S."/>
            <person name="Menzies A."/>
            <person name="Mudie L."/>
            <person name="Stebbings L."/>
            <person name="Largaespada D.A."/>
            <person name="Wessels L.F.A."/>
            <person name="Richard S."/>
            <person name="Kahnoski R.J."/>
            <person name="Anema J."/>
            <person name="Tuveson D.A."/>
            <person name="Perez-Mancera P.A."/>
            <person name="Mustonen V."/>
            <person name="Fischer A."/>
            <person name="Adams D.J."/>
            <person name="Rust A."/>
            <person name="Chan-On W."/>
            <person name="Subimerb C."/>
            <person name="Dykema K."/>
            <person name="Furge K."/>
            <person name="Campbell P.J."/>
            <person name="Teh B.T."/>
            <person name="Stratton M.R."/>
            <person name="Futreal P.A."/>
        </authorList>
    </citation>
    <scope>VARIANT MET-216</scope>
</reference>
<organism>
    <name type="scientific">Homo sapiens</name>
    <name type="common">Human</name>
    <dbReference type="NCBI Taxonomy" id="9606"/>
    <lineage>
        <taxon>Eukaryota</taxon>
        <taxon>Metazoa</taxon>
        <taxon>Chordata</taxon>
        <taxon>Craniata</taxon>
        <taxon>Vertebrata</taxon>
        <taxon>Euteleostomi</taxon>
        <taxon>Mammalia</taxon>
        <taxon>Eutheria</taxon>
        <taxon>Euarchontoglires</taxon>
        <taxon>Primates</taxon>
        <taxon>Haplorrhini</taxon>
        <taxon>Catarrhini</taxon>
        <taxon>Hominidae</taxon>
        <taxon>Homo</taxon>
    </lineage>
</organism>
<protein>
    <recommendedName>
        <fullName>Olfactory receptor 6K3</fullName>
    </recommendedName>
    <alternativeName>
        <fullName>Olfactory receptor OR1-18</fullName>
    </alternativeName>
</protein>
<dbReference type="EMBL" id="AB065633">
    <property type="protein sequence ID" value="BAC05859.1"/>
    <property type="status" value="ALT_INIT"/>
    <property type="molecule type" value="Genomic_DNA"/>
</dbReference>
<dbReference type="EMBL" id="AL513205">
    <property type="status" value="NOT_ANNOTATED_CDS"/>
    <property type="molecule type" value="Genomic_DNA"/>
</dbReference>
<dbReference type="EMBL" id="BK004197">
    <property type="protein sequence ID" value="DAA04595.1"/>
    <property type="molecule type" value="Genomic_DNA"/>
</dbReference>
<dbReference type="RefSeq" id="NP_001005327.2">
    <property type="nucleotide sequence ID" value="NM_001005327.2"/>
</dbReference>
<dbReference type="SMR" id="Q8NGY3"/>
<dbReference type="BioGRID" id="133807">
    <property type="interactions" value="4"/>
</dbReference>
<dbReference type="FunCoup" id="Q8NGY3">
    <property type="interactions" value="432"/>
</dbReference>
<dbReference type="IntAct" id="Q8NGY3">
    <property type="interactions" value="1"/>
</dbReference>
<dbReference type="MINT" id="Q8NGY3"/>
<dbReference type="STRING" id="9606.ENSP00000357127"/>
<dbReference type="GlyCosmos" id="Q8NGY3">
    <property type="glycosylation" value="3 sites, 1 glycan"/>
</dbReference>
<dbReference type="GlyGen" id="Q8NGY3">
    <property type="glycosylation" value="3 sites, 1 O-linked glycan (2 sites)"/>
</dbReference>
<dbReference type="iPTMnet" id="Q8NGY3"/>
<dbReference type="PhosphoSitePlus" id="Q8NGY3"/>
<dbReference type="BioMuta" id="OR6K3"/>
<dbReference type="DMDM" id="229462932"/>
<dbReference type="MassIVE" id="Q8NGY3"/>
<dbReference type="PaxDb" id="9606-ENSP00000357127"/>
<dbReference type="Antibodypedia" id="20464">
    <property type="antibodies" value="104 antibodies from 22 providers"/>
</dbReference>
<dbReference type="DNASU" id="391114"/>
<dbReference type="Ensembl" id="ENST00000368146.1">
    <property type="protein sequence ID" value="ENSP00000357128.1"/>
    <property type="gene ID" value="ENSG00000203757.2"/>
</dbReference>
<dbReference type="GeneID" id="391114"/>
<dbReference type="KEGG" id="hsa:391114"/>
<dbReference type="UCSC" id="uc021pbn.1">
    <property type="organism name" value="human"/>
</dbReference>
<dbReference type="AGR" id="HGNC:15030"/>
<dbReference type="CTD" id="391114"/>
<dbReference type="GeneCards" id="OR6K3"/>
<dbReference type="HGNC" id="HGNC:15030">
    <property type="gene designation" value="OR6K3"/>
</dbReference>
<dbReference type="HPA" id="ENSG00000203757">
    <property type="expression patterns" value="Tissue enriched (bone)"/>
</dbReference>
<dbReference type="neXtProt" id="NX_Q8NGY3"/>
<dbReference type="PharmGKB" id="PA32590"/>
<dbReference type="VEuPathDB" id="HostDB:ENSG00000203757"/>
<dbReference type="eggNOG" id="ENOG502T9P2">
    <property type="taxonomic scope" value="Eukaryota"/>
</dbReference>
<dbReference type="GeneTree" id="ENSGT00940000162973"/>
<dbReference type="HOGENOM" id="CLU_012526_0_1_1"/>
<dbReference type="InParanoid" id="Q8NGY3"/>
<dbReference type="OrthoDB" id="6144223at2759"/>
<dbReference type="PAN-GO" id="Q8NGY3">
    <property type="GO annotations" value="4 GO annotations based on evolutionary models"/>
</dbReference>
<dbReference type="PhylomeDB" id="Q8NGY3"/>
<dbReference type="TreeFam" id="TF337307"/>
<dbReference type="PathwayCommons" id="Q8NGY3"/>
<dbReference type="Reactome" id="R-HSA-9752946">
    <property type="pathway name" value="Expression and translocation of olfactory receptors"/>
</dbReference>
<dbReference type="SignaLink" id="Q8NGY3"/>
<dbReference type="BioGRID-ORCS" id="391114">
    <property type="hits" value="7 hits in 728 CRISPR screens"/>
</dbReference>
<dbReference type="GenomeRNAi" id="391114"/>
<dbReference type="Pharos" id="Q8NGY3">
    <property type="development level" value="Tdark"/>
</dbReference>
<dbReference type="PRO" id="PR:Q8NGY3"/>
<dbReference type="Proteomes" id="UP000005640">
    <property type="component" value="Chromosome 1"/>
</dbReference>
<dbReference type="RNAct" id="Q8NGY3">
    <property type="molecule type" value="protein"/>
</dbReference>
<dbReference type="Bgee" id="ENSG00000203757">
    <property type="expression patterns" value="Expressed in bone marrow and 9 other cell types or tissues"/>
</dbReference>
<dbReference type="ExpressionAtlas" id="Q8NGY3">
    <property type="expression patterns" value="baseline and differential"/>
</dbReference>
<dbReference type="GO" id="GO:0016020">
    <property type="term" value="C:membrane"/>
    <property type="evidence" value="ECO:0000318"/>
    <property type="project" value="GO_Central"/>
</dbReference>
<dbReference type="GO" id="GO:0005886">
    <property type="term" value="C:plasma membrane"/>
    <property type="evidence" value="ECO:0007669"/>
    <property type="project" value="UniProtKB-SubCell"/>
</dbReference>
<dbReference type="GO" id="GO:0004930">
    <property type="term" value="F:G protein-coupled receptor activity"/>
    <property type="evidence" value="ECO:0007669"/>
    <property type="project" value="UniProtKB-KW"/>
</dbReference>
<dbReference type="GO" id="GO:0005549">
    <property type="term" value="F:odorant binding"/>
    <property type="evidence" value="ECO:0000318"/>
    <property type="project" value="GO_Central"/>
</dbReference>
<dbReference type="GO" id="GO:0004984">
    <property type="term" value="F:olfactory receptor activity"/>
    <property type="evidence" value="ECO:0000318"/>
    <property type="project" value="GO_Central"/>
</dbReference>
<dbReference type="GO" id="GO:0050911">
    <property type="term" value="P:detection of chemical stimulus involved in sensory perception of smell"/>
    <property type="evidence" value="ECO:0000318"/>
    <property type="project" value="GO_Central"/>
</dbReference>
<dbReference type="CDD" id="cd15914">
    <property type="entry name" value="7tmA_OR6N-like"/>
    <property type="match status" value="1"/>
</dbReference>
<dbReference type="FunFam" id="1.20.1070.10:FF:000001">
    <property type="entry name" value="Olfactory receptor"/>
    <property type="match status" value="1"/>
</dbReference>
<dbReference type="Gene3D" id="1.20.1070.10">
    <property type="entry name" value="Rhodopsin 7-helix transmembrane proteins"/>
    <property type="match status" value="1"/>
</dbReference>
<dbReference type="InterPro" id="IPR000276">
    <property type="entry name" value="GPCR_Rhodpsn"/>
</dbReference>
<dbReference type="InterPro" id="IPR017452">
    <property type="entry name" value="GPCR_Rhodpsn_7TM"/>
</dbReference>
<dbReference type="InterPro" id="IPR000725">
    <property type="entry name" value="Olfact_rcpt"/>
</dbReference>
<dbReference type="InterPro" id="IPR050939">
    <property type="entry name" value="Olfactory_GPCR1"/>
</dbReference>
<dbReference type="PANTHER" id="PTHR24242">
    <property type="entry name" value="G-PROTEIN COUPLED RECEPTOR"/>
    <property type="match status" value="1"/>
</dbReference>
<dbReference type="PANTHER" id="PTHR24242:SF402">
    <property type="entry name" value="OLFACTORY RECEPTOR"/>
    <property type="match status" value="1"/>
</dbReference>
<dbReference type="Pfam" id="PF13853">
    <property type="entry name" value="7tm_4"/>
    <property type="match status" value="1"/>
</dbReference>
<dbReference type="PRINTS" id="PR00237">
    <property type="entry name" value="GPCRRHODOPSN"/>
</dbReference>
<dbReference type="PRINTS" id="PR00245">
    <property type="entry name" value="OLFACTORYR"/>
</dbReference>
<dbReference type="SUPFAM" id="SSF81321">
    <property type="entry name" value="Family A G protein-coupled receptor-like"/>
    <property type="match status" value="1"/>
</dbReference>
<dbReference type="PROSITE" id="PS00237">
    <property type="entry name" value="G_PROTEIN_RECEP_F1_1"/>
    <property type="match status" value="1"/>
</dbReference>
<dbReference type="PROSITE" id="PS50262">
    <property type="entry name" value="G_PROTEIN_RECEP_F1_2"/>
    <property type="match status" value="1"/>
</dbReference>
<evidence type="ECO:0000255" key="1"/>
<evidence type="ECO:0000255" key="2">
    <source>
        <dbReference type="PROSITE-ProRule" id="PRU00521"/>
    </source>
</evidence>
<evidence type="ECO:0000269" key="3">
    <source>
    </source>
</evidence>
<evidence type="ECO:0000269" key="4">
    <source>
    </source>
</evidence>
<evidence type="ECO:0000305" key="5"/>
<accession>Q8NGY3</accession>
<accession>Q5VUV0</accession>
<accession>Q6IFR5</accession>